<sequence length="282" mass="29613">MTEILDGAAVAKLTNEKTANRVAKLGKPVTLAVIYDPQNDGSRLYVGMKSKKAAALGIQTKDIPTAADATTESVLALVASLNADPSITGILVQSPLAKGVKEREIFSAVAPHKDADGLGATVQGMLFGDALDDYTVAATPQGVMTLLKHYNIDIFGKQALVIGRSQLFGRPMFALLTNADATVTLAHRYTPENVLKDYLKRADIVVVGVGKPDFIQGSDLKPGAVVIDVGMNFVNGKAVGDVNFDSVQSIASYITPVPGGVGPMTIATLLENTITLAENYQA</sequence>
<name>FOLD_LEUCK</name>
<reference key="1">
    <citation type="journal article" date="2008" name="J. Bacteriol.">
        <title>Complete genome sequence of Leuconostoc citreum KM20.</title>
        <authorList>
            <person name="Kim J.F."/>
            <person name="Jeong H."/>
            <person name="Lee J.-S."/>
            <person name="Choi S.-H."/>
            <person name="Ha M."/>
            <person name="Hur C.-G."/>
            <person name="Kim J.-S."/>
            <person name="Lee S."/>
            <person name="Park H.-S."/>
            <person name="Park Y.-H."/>
            <person name="Oh T.K."/>
        </authorList>
    </citation>
    <scope>NUCLEOTIDE SEQUENCE [LARGE SCALE GENOMIC DNA]</scope>
    <source>
        <strain>KM20</strain>
    </source>
</reference>
<evidence type="ECO:0000255" key="1">
    <source>
        <dbReference type="HAMAP-Rule" id="MF_01576"/>
    </source>
</evidence>
<protein>
    <recommendedName>
        <fullName evidence="1">Bifunctional protein FolD</fullName>
    </recommendedName>
    <domain>
        <recommendedName>
            <fullName evidence="1">Methylenetetrahydrofolate dehydrogenase</fullName>
            <ecNumber evidence="1">1.5.1.5</ecNumber>
        </recommendedName>
    </domain>
    <domain>
        <recommendedName>
            <fullName evidence="1">Methenyltetrahydrofolate cyclohydrolase</fullName>
            <ecNumber evidence="1">3.5.4.9</ecNumber>
        </recommendedName>
    </domain>
</protein>
<comment type="function">
    <text evidence="1">Catalyzes the oxidation of 5,10-methylenetetrahydrofolate to 5,10-methenyltetrahydrofolate and then the hydrolysis of 5,10-methenyltetrahydrofolate to 10-formyltetrahydrofolate.</text>
</comment>
<comment type="catalytic activity">
    <reaction evidence="1">
        <text>(6R)-5,10-methylene-5,6,7,8-tetrahydrofolate + NADP(+) = (6R)-5,10-methenyltetrahydrofolate + NADPH</text>
        <dbReference type="Rhea" id="RHEA:22812"/>
        <dbReference type="ChEBI" id="CHEBI:15636"/>
        <dbReference type="ChEBI" id="CHEBI:57455"/>
        <dbReference type="ChEBI" id="CHEBI:57783"/>
        <dbReference type="ChEBI" id="CHEBI:58349"/>
        <dbReference type="EC" id="1.5.1.5"/>
    </reaction>
</comment>
<comment type="catalytic activity">
    <reaction evidence="1">
        <text>(6R)-5,10-methenyltetrahydrofolate + H2O = (6R)-10-formyltetrahydrofolate + H(+)</text>
        <dbReference type="Rhea" id="RHEA:23700"/>
        <dbReference type="ChEBI" id="CHEBI:15377"/>
        <dbReference type="ChEBI" id="CHEBI:15378"/>
        <dbReference type="ChEBI" id="CHEBI:57455"/>
        <dbReference type="ChEBI" id="CHEBI:195366"/>
        <dbReference type="EC" id="3.5.4.9"/>
    </reaction>
</comment>
<comment type="pathway">
    <text evidence="1">One-carbon metabolism; tetrahydrofolate interconversion.</text>
</comment>
<comment type="subunit">
    <text evidence="1">Homodimer.</text>
</comment>
<comment type="similarity">
    <text evidence="1">Belongs to the tetrahydrofolate dehydrogenase/cyclohydrolase family.</text>
</comment>
<dbReference type="EC" id="1.5.1.5" evidence="1"/>
<dbReference type="EC" id="3.5.4.9" evidence="1"/>
<dbReference type="EMBL" id="DQ489736">
    <property type="protein sequence ID" value="ACA83146.1"/>
    <property type="molecule type" value="Genomic_DNA"/>
</dbReference>
<dbReference type="RefSeq" id="WP_004904765.1">
    <property type="nucleotide sequence ID" value="NC_010471.1"/>
</dbReference>
<dbReference type="SMR" id="B1N044"/>
<dbReference type="STRING" id="349519.LCK_01322"/>
<dbReference type="KEGG" id="lci:LCK_01322"/>
<dbReference type="eggNOG" id="COG0190">
    <property type="taxonomic scope" value="Bacteria"/>
</dbReference>
<dbReference type="HOGENOM" id="CLU_034045_2_1_9"/>
<dbReference type="OrthoDB" id="9803580at2"/>
<dbReference type="UniPathway" id="UPA00193"/>
<dbReference type="Proteomes" id="UP000002166">
    <property type="component" value="Chromosome"/>
</dbReference>
<dbReference type="GO" id="GO:0005829">
    <property type="term" value="C:cytosol"/>
    <property type="evidence" value="ECO:0007669"/>
    <property type="project" value="TreeGrafter"/>
</dbReference>
<dbReference type="GO" id="GO:0004477">
    <property type="term" value="F:methenyltetrahydrofolate cyclohydrolase activity"/>
    <property type="evidence" value="ECO:0007669"/>
    <property type="project" value="UniProtKB-UniRule"/>
</dbReference>
<dbReference type="GO" id="GO:0004488">
    <property type="term" value="F:methylenetetrahydrofolate dehydrogenase (NADP+) activity"/>
    <property type="evidence" value="ECO:0007669"/>
    <property type="project" value="UniProtKB-UniRule"/>
</dbReference>
<dbReference type="GO" id="GO:0000105">
    <property type="term" value="P:L-histidine biosynthetic process"/>
    <property type="evidence" value="ECO:0007669"/>
    <property type="project" value="UniProtKB-KW"/>
</dbReference>
<dbReference type="GO" id="GO:0009086">
    <property type="term" value="P:methionine biosynthetic process"/>
    <property type="evidence" value="ECO:0007669"/>
    <property type="project" value="UniProtKB-KW"/>
</dbReference>
<dbReference type="GO" id="GO:0006164">
    <property type="term" value="P:purine nucleotide biosynthetic process"/>
    <property type="evidence" value="ECO:0007669"/>
    <property type="project" value="UniProtKB-KW"/>
</dbReference>
<dbReference type="GO" id="GO:0035999">
    <property type="term" value="P:tetrahydrofolate interconversion"/>
    <property type="evidence" value="ECO:0007669"/>
    <property type="project" value="UniProtKB-UniRule"/>
</dbReference>
<dbReference type="CDD" id="cd01080">
    <property type="entry name" value="NAD_bind_m-THF_DH_Cyclohyd"/>
    <property type="match status" value="1"/>
</dbReference>
<dbReference type="FunFam" id="3.40.50.720:FF:000006">
    <property type="entry name" value="Bifunctional protein FolD"/>
    <property type="match status" value="1"/>
</dbReference>
<dbReference type="Gene3D" id="3.40.50.10860">
    <property type="entry name" value="Leucine Dehydrogenase, chain A, domain 1"/>
    <property type="match status" value="1"/>
</dbReference>
<dbReference type="Gene3D" id="3.40.50.720">
    <property type="entry name" value="NAD(P)-binding Rossmann-like Domain"/>
    <property type="match status" value="1"/>
</dbReference>
<dbReference type="HAMAP" id="MF_01576">
    <property type="entry name" value="THF_DHG_CYH"/>
    <property type="match status" value="1"/>
</dbReference>
<dbReference type="InterPro" id="IPR046346">
    <property type="entry name" value="Aminoacid_DH-like_N_sf"/>
</dbReference>
<dbReference type="InterPro" id="IPR036291">
    <property type="entry name" value="NAD(P)-bd_dom_sf"/>
</dbReference>
<dbReference type="InterPro" id="IPR000672">
    <property type="entry name" value="THF_DH/CycHdrlase"/>
</dbReference>
<dbReference type="InterPro" id="IPR020630">
    <property type="entry name" value="THF_DH/CycHdrlase_cat_dom"/>
</dbReference>
<dbReference type="InterPro" id="IPR020867">
    <property type="entry name" value="THF_DH/CycHdrlase_CS"/>
</dbReference>
<dbReference type="InterPro" id="IPR020631">
    <property type="entry name" value="THF_DH/CycHdrlase_NAD-bd_dom"/>
</dbReference>
<dbReference type="PANTHER" id="PTHR48099:SF5">
    <property type="entry name" value="C-1-TETRAHYDROFOLATE SYNTHASE, CYTOPLASMIC"/>
    <property type="match status" value="1"/>
</dbReference>
<dbReference type="PANTHER" id="PTHR48099">
    <property type="entry name" value="C-1-TETRAHYDROFOLATE SYNTHASE, CYTOPLASMIC-RELATED"/>
    <property type="match status" value="1"/>
</dbReference>
<dbReference type="Pfam" id="PF00763">
    <property type="entry name" value="THF_DHG_CYH"/>
    <property type="match status" value="1"/>
</dbReference>
<dbReference type="Pfam" id="PF02882">
    <property type="entry name" value="THF_DHG_CYH_C"/>
    <property type="match status" value="1"/>
</dbReference>
<dbReference type="PRINTS" id="PR00085">
    <property type="entry name" value="THFDHDRGNASE"/>
</dbReference>
<dbReference type="SUPFAM" id="SSF53223">
    <property type="entry name" value="Aminoacid dehydrogenase-like, N-terminal domain"/>
    <property type="match status" value="1"/>
</dbReference>
<dbReference type="SUPFAM" id="SSF51735">
    <property type="entry name" value="NAD(P)-binding Rossmann-fold domains"/>
    <property type="match status" value="1"/>
</dbReference>
<dbReference type="PROSITE" id="PS00767">
    <property type="entry name" value="THF_DHG_CYH_2"/>
    <property type="match status" value="1"/>
</dbReference>
<feature type="chain" id="PRO_1000196790" description="Bifunctional protein FolD">
    <location>
        <begin position="1"/>
        <end position="282"/>
    </location>
</feature>
<feature type="binding site" evidence="1">
    <location>
        <begin position="163"/>
        <end position="165"/>
    </location>
    <ligand>
        <name>NADP(+)</name>
        <dbReference type="ChEBI" id="CHEBI:58349"/>
    </ligand>
</feature>
<gene>
    <name evidence="1" type="primary">folD</name>
    <name type="ordered locus">LCK_01322</name>
</gene>
<accession>B1N044</accession>
<proteinExistence type="inferred from homology"/>
<organism>
    <name type="scientific">Leuconostoc citreum (strain KM20)</name>
    <dbReference type="NCBI Taxonomy" id="349519"/>
    <lineage>
        <taxon>Bacteria</taxon>
        <taxon>Bacillati</taxon>
        <taxon>Bacillota</taxon>
        <taxon>Bacilli</taxon>
        <taxon>Lactobacillales</taxon>
        <taxon>Lactobacillaceae</taxon>
        <taxon>Leuconostoc</taxon>
    </lineage>
</organism>
<keyword id="KW-0028">Amino-acid biosynthesis</keyword>
<keyword id="KW-0368">Histidine biosynthesis</keyword>
<keyword id="KW-0378">Hydrolase</keyword>
<keyword id="KW-0486">Methionine biosynthesis</keyword>
<keyword id="KW-0511">Multifunctional enzyme</keyword>
<keyword id="KW-0521">NADP</keyword>
<keyword id="KW-0554">One-carbon metabolism</keyword>
<keyword id="KW-0560">Oxidoreductase</keyword>
<keyword id="KW-0658">Purine biosynthesis</keyword>
<keyword id="KW-1185">Reference proteome</keyword>